<accession>O66608</accession>
<organism>
    <name type="scientific">Aquifex aeolicus (strain VF5)</name>
    <dbReference type="NCBI Taxonomy" id="224324"/>
    <lineage>
        <taxon>Bacteria</taxon>
        <taxon>Pseudomonadati</taxon>
        <taxon>Aquificota</taxon>
        <taxon>Aquificia</taxon>
        <taxon>Aquificales</taxon>
        <taxon>Aquificaceae</taxon>
        <taxon>Aquifex</taxon>
    </lineage>
</organism>
<comment type="function">
    <text evidence="1">Catalyzes the ATP-dependent conversion of 5-aminoimidazole ribonucleotide (AIR) and HCO(3)(-) to N5-carboxyaminoimidazole ribonucleotide (N5-CAIR).</text>
</comment>
<comment type="catalytic activity">
    <reaction evidence="1">
        <text>5-amino-1-(5-phospho-beta-D-ribosyl)imidazole + hydrogencarbonate + ATP = 5-carboxyamino-1-(5-phospho-D-ribosyl)imidazole + ADP + phosphate + 2 H(+)</text>
        <dbReference type="Rhea" id="RHEA:19317"/>
        <dbReference type="ChEBI" id="CHEBI:15378"/>
        <dbReference type="ChEBI" id="CHEBI:17544"/>
        <dbReference type="ChEBI" id="CHEBI:30616"/>
        <dbReference type="ChEBI" id="CHEBI:43474"/>
        <dbReference type="ChEBI" id="CHEBI:58730"/>
        <dbReference type="ChEBI" id="CHEBI:137981"/>
        <dbReference type="ChEBI" id="CHEBI:456216"/>
        <dbReference type="EC" id="6.3.4.18"/>
    </reaction>
</comment>
<comment type="pathway">
    <text evidence="1">Purine metabolism; IMP biosynthesis via de novo pathway; 5-amino-1-(5-phospho-D-ribosyl)imidazole-4-carboxylate from 5-amino-1-(5-phospho-D-ribosyl)imidazole (N5-CAIR route): step 1/2.</text>
</comment>
<comment type="subunit">
    <text evidence="1">Homodimer.</text>
</comment>
<comment type="similarity">
    <text evidence="1">Belongs to the PurK/PurT family.</text>
</comment>
<protein>
    <recommendedName>
        <fullName evidence="1">N5-carboxyaminoimidazole ribonucleotide synthase</fullName>
        <shortName evidence="1">N5-CAIR synthase</shortName>
        <ecNumber evidence="1">6.3.4.18</ecNumber>
    </recommendedName>
    <alternativeName>
        <fullName evidence="1">5-(carboxyamino)imidazole ribonucleotide synthetase</fullName>
    </alternativeName>
</protein>
<sequence length="365" mass="41988">MLTVGILGGGQLGWMTILEGRKLGFKFHVLEDKENAPACRVADRCFRTGQISEFVDSCDIITYEFEHIKDEVLEKCESKLIPNPQALYVKKSRIREKLFLKKHGFPVPEFLVIKRDEIIDALKSFKLPVVIKAEKLGYDGKGQYRIKKLEDANQVVKNHDKEESFIIEEFVKFEAEISCIGVRDREGKTYFYPQPFNKHEEGILIYNYVPYAKLKEAEEITKRLMELLDIVGVFTVEFFLLKDGRVLINEFAPRVHNTGHWTLDGAYTSQFENLLRAITEMPLGSTELKLPSGMVNILGKSYEEIPLKEILSVEGAKLYWYGKEKKPRRKVGHVNVVGRSKEEVVEKVERVFTLLKGSREKLPAP</sequence>
<feature type="chain" id="PRO_0000074993" description="N5-carboxyaminoimidazole ribonucleotide synthase">
    <location>
        <begin position="1"/>
        <end position="365"/>
    </location>
</feature>
<feature type="domain" description="ATP-grasp" evidence="1">
    <location>
        <begin position="97"/>
        <end position="279"/>
    </location>
</feature>
<feature type="binding site" evidence="1">
    <location>
        <position position="93"/>
    </location>
    <ligand>
        <name>ATP</name>
        <dbReference type="ChEBI" id="CHEBI:30616"/>
    </ligand>
</feature>
<feature type="binding site" evidence="1">
    <location>
        <position position="132"/>
    </location>
    <ligand>
        <name>ATP</name>
        <dbReference type="ChEBI" id="CHEBI:30616"/>
    </ligand>
</feature>
<feature type="binding site" evidence="1">
    <location>
        <begin position="137"/>
        <end position="143"/>
    </location>
    <ligand>
        <name>ATP</name>
        <dbReference type="ChEBI" id="CHEBI:30616"/>
    </ligand>
</feature>
<feature type="binding site" evidence="1">
    <location>
        <begin position="168"/>
        <end position="171"/>
    </location>
    <ligand>
        <name>ATP</name>
        <dbReference type="ChEBI" id="CHEBI:30616"/>
    </ligand>
</feature>
<feature type="binding site" evidence="1">
    <location>
        <position position="176"/>
    </location>
    <ligand>
        <name>ATP</name>
        <dbReference type="ChEBI" id="CHEBI:30616"/>
    </ligand>
</feature>
<feature type="binding site" evidence="1">
    <location>
        <position position="199"/>
    </location>
    <ligand>
        <name>ATP</name>
        <dbReference type="ChEBI" id="CHEBI:30616"/>
    </ligand>
</feature>
<feature type="binding site" evidence="1">
    <location>
        <begin position="249"/>
        <end position="250"/>
    </location>
    <ligand>
        <name>ATP</name>
        <dbReference type="ChEBI" id="CHEBI:30616"/>
    </ligand>
</feature>
<feature type="strand" evidence="2">
    <location>
        <begin position="3"/>
        <end position="7"/>
    </location>
</feature>
<feature type="helix" evidence="2">
    <location>
        <begin position="11"/>
        <end position="20"/>
    </location>
</feature>
<feature type="helix" evidence="2">
    <location>
        <begin position="21"/>
        <end position="23"/>
    </location>
</feature>
<feature type="strand" evidence="2">
    <location>
        <begin position="26"/>
        <end position="30"/>
    </location>
</feature>
<feature type="strand" evidence="2">
    <location>
        <begin position="32"/>
        <end position="35"/>
    </location>
</feature>
<feature type="helix" evidence="2">
    <location>
        <begin position="37"/>
        <end position="41"/>
    </location>
</feature>
<feature type="strand" evidence="2">
    <location>
        <begin position="42"/>
        <end position="46"/>
    </location>
</feature>
<feature type="helix" evidence="2">
    <location>
        <begin position="48"/>
        <end position="50"/>
    </location>
</feature>
<feature type="helix" evidence="2">
    <location>
        <begin position="51"/>
        <end position="57"/>
    </location>
</feature>
<feature type="strand" evidence="2">
    <location>
        <begin position="59"/>
        <end position="66"/>
    </location>
</feature>
<feature type="helix" evidence="2">
    <location>
        <begin position="70"/>
        <end position="76"/>
    </location>
</feature>
<feature type="turn" evidence="2">
    <location>
        <begin position="77"/>
        <end position="79"/>
    </location>
</feature>
<feature type="strand" evidence="2">
    <location>
        <begin position="80"/>
        <end position="82"/>
    </location>
</feature>
<feature type="helix" evidence="2">
    <location>
        <begin position="85"/>
        <end position="90"/>
    </location>
</feature>
<feature type="helix" evidence="2">
    <location>
        <begin position="93"/>
        <end position="101"/>
    </location>
</feature>
<feature type="turn" evidence="2">
    <location>
        <begin position="102"/>
        <end position="104"/>
    </location>
</feature>
<feature type="strand" evidence="2">
    <location>
        <begin position="110"/>
        <end position="112"/>
    </location>
</feature>
<feature type="helix" evidence="2">
    <location>
        <begin position="115"/>
        <end position="118"/>
    </location>
</feature>
<feature type="strand" evidence="2">
    <location>
        <begin position="129"/>
        <end position="132"/>
    </location>
</feature>
<feature type="strand" evidence="2">
    <location>
        <begin position="166"/>
        <end position="169"/>
    </location>
</feature>
<feature type="strand" evidence="2">
    <location>
        <begin position="174"/>
        <end position="183"/>
    </location>
</feature>
<feature type="strand" evidence="2">
    <location>
        <begin position="189"/>
        <end position="191"/>
    </location>
</feature>
<feature type="strand" evidence="2">
    <location>
        <begin position="194"/>
        <end position="200"/>
    </location>
</feature>
<feature type="strand" evidence="2">
    <location>
        <begin position="203"/>
        <end position="212"/>
    </location>
</feature>
<feature type="helix" evidence="2">
    <location>
        <begin position="215"/>
        <end position="227"/>
    </location>
</feature>
<feature type="strand" evidence="2">
    <location>
        <begin position="232"/>
        <end position="240"/>
    </location>
</feature>
<feature type="strand" evidence="2">
    <location>
        <begin position="246"/>
        <end position="254"/>
    </location>
</feature>
<feature type="helix" evidence="2">
    <location>
        <begin position="257"/>
        <end position="261"/>
    </location>
</feature>
<feature type="helix" evidence="2">
    <location>
        <begin position="262"/>
        <end position="265"/>
    </location>
</feature>
<feature type="strand" evidence="2">
    <location>
        <begin position="266"/>
        <end position="268"/>
    </location>
</feature>
<feature type="helix" evidence="2">
    <location>
        <begin position="270"/>
        <end position="278"/>
    </location>
</feature>
<feature type="strand" evidence="2">
    <location>
        <begin position="288"/>
        <end position="290"/>
    </location>
</feature>
<feature type="strand" evidence="2">
    <location>
        <begin position="292"/>
        <end position="299"/>
    </location>
</feature>
<feature type="helix" evidence="2">
    <location>
        <begin position="302"/>
        <end position="304"/>
    </location>
</feature>
<feature type="helix" evidence="2">
    <location>
        <begin position="307"/>
        <end position="310"/>
    </location>
</feature>
<feature type="strand" evidence="2">
    <location>
        <begin position="316"/>
        <end position="320"/>
    </location>
</feature>
<feature type="strand" evidence="2">
    <location>
        <begin position="330"/>
        <end position="337"/>
    </location>
</feature>
<feature type="helix" evidence="2">
    <location>
        <begin position="341"/>
        <end position="353"/>
    </location>
</feature>
<keyword id="KW-0002">3D-structure</keyword>
<keyword id="KW-0067">ATP-binding</keyword>
<keyword id="KW-0436">Ligase</keyword>
<keyword id="KW-0547">Nucleotide-binding</keyword>
<keyword id="KW-0658">Purine biosynthesis</keyword>
<keyword id="KW-1185">Reference proteome</keyword>
<dbReference type="EC" id="6.3.4.18" evidence="1"/>
<dbReference type="EMBL" id="AE000657">
    <property type="protein sequence ID" value="AAC06567.1"/>
    <property type="molecule type" value="Genomic_DNA"/>
</dbReference>
<dbReference type="PIR" id="D70322">
    <property type="entry name" value="D70322"/>
</dbReference>
<dbReference type="RefSeq" id="NP_213168.1">
    <property type="nucleotide sequence ID" value="NC_000918.1"/>
</dbReference>
<dbReference type="RefSeq" id="WP_010880106.1">
    <property type="nucleotide sequence ID" value="NC_000918.1"/>
</dbReference>
<dbReference type="PDB" id="2Z04">
    <property type="method" value="X-ray"/>
    <property type="resolution" value="2.35 A"/>
    <property type="chains" value="A/B=1-365"/>
</dbReference>
<dbReference type="PDBsum" id="2Z04"/>
<dbReference type="SMR" id="O66608"/>
<dbReference type="FunCoup" id="O66608">
    <property type="interactions" value="332"/>
</dbReference>
<dbReference type="STRING" id="224324.aq_245"/>
<dbReference type="EnsemblBacteria" id="AAC06567">
    <property type="protein sequence ID" value="AAC06567"/>
    <property type="gene ID" value="aq_245"/>
</dbReference>
<dbReference type="KEGG" id="aae:aq_245"/>
<dbReference type="PATRIC" id="fig|224324.8.peg.200"/>
<dbReference type="eggNOG" id="COG0026">
    <property type="taxonomic scope" value="Bacteria"/>
</dbReference>
<dbReference type="HOGENOM" id="CLU_011534_0_0_0"/>
<dbReference type="InParanoid" id="O66608"/>
<dbReference type="OrthoDB" id="9804625at2"/>
<dbReference type="UniPathway" id="UPA00074">
    <property type="reaction ID" value="UER00942"/>
</dbReference>
<dbReference type="EvolutionaryTrace" id="O66608"/>
<dbReference type="Proteomes" id="UP000000798">
    <property type="component" value="Chromosome"/>
</dbReference>
<dbReference type="GO" id="GO:0034028">
    <property type="term" value="F:5-(carboxyamino)imidazole ribonucleotide synthase activity"/>
    <property type="evidence" value="ECO:0007669"/>
    <property type="project" value="UniProtKB-UniRule"/>
</dbReference>
<dbReference type="GO" id="GO:0005524">
    <property type="term" value="F:ATP binding"/>
    <property type="evidence" value="ECO:0007669"/>
    <property type="project" value="UniProtKB-KW"/>
</dbReference>
<dbReference type="GO" id="GO:0046872">
    <property type="term" value="F:metal ion binding"/>
    <property type="evidence" value="ECO:0007669"/>
    <property type="project" value="InterPro"/>
</dbReference>
<dbReference type="GO" id="GO:0004638">
    <property type="term" value="F:phosphoribosylaminoimidazole carboxylase activity"/>
    <property type="evidence" value="ECO:0007669"/>
    <property type="project" value="InterPro"/>
</dbReference>
<dbReference type="GO" id="GO:0006189">
    <property type="term" value="P:'de novo' IMP biosynthetic process"/>
    <property type="evidence" value="ECO:0007669"/>
    <property type="project" value="UniProtKB-UniRule"/>
</dbReference>
<dbReference type="Gene3D" id="3.40.50.20">
    <property type="match status" value="1"/>
</dbReference>
<dbReference type="Gene3D" id="3.30.1490.20">
    <property type="entry name" value="ATP-grasp fold, A domain"/>
    <property type="match status" value="1"/>
</dbReference>
<dbReference type="Gene3D" id="3.30.470.20">
    <property type="entry name" value="ATP-grasp fold, B domain"/>
    <property type="match status" value="1"/>
</dbReference>
<dbReference type="HAMAP" id="MF_01928">
    <property type="entry name" value="PurK"/>
    <property type="match status" value="1"/>
</dbReference>
<dbReference type="InterPro" id="IPR011761">
    <property type="entry name" value="ATP-grasp"/>
</dbReference>
<dbReference type="InterPro" id="IPR003135">
    <property type="entry name" value="ATP-grasp_carboxylate-amine"/>
</dbReference>
<dbReference type="InterPro" id="IPR013815">
    <property type="entry name" value="ATP_grasp_subdomain_1"/>
</dbReference>
<dbReference type="InterPro" id="IPR016185">
    <property type="entry name" value="PreATP-grasp_dom_sf"/>
</dbReference>
<dbReference type="InterPro" id="IPR005875">
    <property type="entry name" value="PurK"/>
</dbReference>
<dbReference type="InterPro" id="IPR040686">
    <property type="entry name" value="PurK_C"/>
</dbReference>
<dbReference type="InterPro" id="IPR054350">
    <property type="entry name" value="PurT/PurK_preATP-grasp"/>
</dbReference>
<dbReference type="InterPro" id="IPR011054">
    <property type="entry name" value="Rudment_hybrid_motif"/>
</dbReference>
<dbReference type="NCBIfam" id="NF004679">
    <property type="entry name" value="PRK06019.1-5"/>
    <property type="match status" value="1"/>
</dbReference>
<dbReference type="NCBIfam" id="TIGR01161">
    <property type="entry name" value="purK"/>
    <property type="match status" value="1"/>
</dbReference>
<dbReference type="PANTHER" id="PTHR11609:SF5">
    <property type="entry name" value="PHOSPHORIBOSYLAMINOIMIDAZOLE CARBOXYLASE"/>
    <property type="match status" value="1"/>
</dbReference>
<dbReference type="PANTHER" id="PTHR11609">
    <property type="entry name" value="PURINE BIOSYNTHESIS PROTEIN 6/7, PUR6/7"/>
    <property type="match status" value="1"/>
</dbReference>
<dbReference type="Pfam" id="PF02222">
    <property type="entry name" value="ATP-grasp"/>
    <property type="match status" value="1"/>
</dbReference>
<dbReference type="Pfam" id="PF17769">
    <property type="entry name" value="PurK_C"/>
    <property type="match status" value="1"/>
</dbReference>
<dbReference type="Pfam" id="PF22660">
    <property type="entry name" value="RS_preATP-grasp-like"/>
    <property type="match status" value="1"/>
</dbReference>
<dbReference type="SUPFAM" id="SSF56059">
    <property type="entry name" value="Glutathione synthetase ATP-binding domain-like"/>
    <property type="match status" value="1"/>
</dbReference>
<dbReference type="SUPFAM" id="SSF52440">
    <property type="entry name" value="PreATP-grasp domain"/>
    <property type="match status" value="1"/>
</dbReference>
<dbReference type="SUPFAM" id="SSF51246">
    <property type="entry name" value="Rudiment single hybrid motif"/>
    <property type="match status" value="1"/>
</dbReference>
<dbReference type="PROSITE" id="PS50975">
    <property type="entry name" value="ATP_GRASP"/>
    <property type="match status" value="1"/>
</dbReference>
<evidence type="ECO:0000255" key="1">
    <source>
        <dbReference type="HAMAP-Rule" id="MF_01928"/>
    </source>
</evidence>
<evidence type="ECO:0007829" key="2">
    <source>
        <dbReference type="PDB" id="2Z04"/>
    </source>
</evidence>
<gene>
    <name evidence="1" type="primary">purK</name>
    <name type="ordered locus">aq_245</name>
</gene>
<proteinExistence type="evidence at protein level"/>
<name>PURK_AQUAE</name>
<reference key="1">
    <citation type="journal article" date="1998" name="Nature">
        <title>The complete genome of the hyperthermophilic bacterium Aquifex aeolicus.</title>
        <authorList>
            <person name="Deckert G."/>
            <person name="Warren P.V."/>
            <person name="Gaasterland T."/>
            <person name="Young W.G."/>
            <person name="Lenox A.L."/>
            <person name="Graham D.E."/>
            <person name="Overbeek R."/>
            <person name="Snead M.A."/>
            <person name="Keller M."/>
            <person name="Aujay M."/>
            <person name="Huber R."/>
            <person name="Feldman R.A."/>
            <person name="Short J.M."/>
            <person name="Olsen G.J."/>
            <person name="Swanson R.V."/>
        </authorList>
    </citation>
    <scope>NUCLEOTIDE SEQUENCE [LARGE SCALE GENOMIC DNA]</scope>
    <source>
        <strain>VF5</strain>
    </source>
</reference>